<organism>
    <name type="scientific">Shewanella denitrificans (strain OS217 / ATCC BAA-1090 / DSM 15013)</name>
    <dbReference type="NCBI Taxonomy" id="318161"/>
    <lineage>
        <taxon>Bacteria</taxon>
        <taxon>Pseudomonadati</taxon>
        <taxon>Pseudomonadota</taxon>
        <taxon>Gammaproteobacteria</taxon>
        <taxon>Alteromonadales</taxon>
        <taxon>Shewanellaceae</taxon>
        <taxon>Shewanella</taxon>
    </lineage>
</organism>
<name>ARGB_SHEDO</name>
<feature type="chain" id="PRO_1000092886" description="Acetylglutamate kinase">
    <location>
        <begin position="1"/>
        <end position="260"/>
    </location>
</feature>
<feature type="binding site" evidence="1">
    <location>
        <begin position="46"/>
        <end position="47"/>
    </location>
    <ligand>
        <name>substrate</name>
    </ligand>
</feature>
<feature type="binding site" evidence="1">
    <location>
        <position position="68"/>
    </location>
    <ligand>
        <name>substrate</name>
    </ligand>
</feature>
<feature type="binding site" evidence="1">
    <location>
        <position position="160"/>
    </location>
    <ligand>
        <name>substrate</name>
    </ligand>
</feature>
<feature type="site" description="Transition state stabilizer" evidence="1">
    <location>
        <position position="11"/>
    </location>
</feature>
<feature type="site" description="Transition state stabilizer" evidence="1">
    <location>
        <position position="219"/>
    </location>
</feature>
<keyword id="KW-0028">Amino-acid biosynthesis</keyword>
<keyword id="KW-0055">Arginine biosynthesis</keyword>
<keyword id="KW-0067">ATP-binding</keyword>
<keyword id="KW-0963">Cytoplasm</keyword>
<keyword id="KW-0418">Kinase</keyword>
<keyword id="KW-0547">Nucleotide-binding</keyword>
<keyword id="KW-1185">Reference proteome</keyword>
<keyword id="KW-0808">Transferase</keyword>
<gene>
    <name evidence="1" type="primary">argB</name>
    <name type="ordered locus">Sden_0251</name>
</gene>
<proteinExistence type="inferred from homology"/>
<evidence type="ECO:0000255" key="1">
    <source>
        <dbReference type="HAMAP-Rule" id="MF_00082"/>
    </source>
</evidence>
<protein>
    <recommendedName>
        <fullName evidence="1">Acetylglutamate kinase</fullName>
        <ecNumber evidence="1">2.7.2.8</ecNumber>
    </recommendedName>
    <alternativeName>
        <fullName evidence="1">N-acetyl-L-glutamate 5-phosphotransferase</fullName>
    </alternativeName>
    <alternativeName>
        <fullName evidence="1">NAG kinase</fullName>
        <shortName evidence="1">NAGK</shortName>
    </alternativeName>
</protein>
<accession>Q12SM9</accession>
<comment type="function">
    <text evidence="1">Catalyzes the ATP-dependent phosphorylation of N-acetyl-L-glutamate.</text>
</comment>
<comment type="catalytic activity">
    <reaction evidence="1">
        <text>N-acetyl-L-glutamate + ATP = N-acetyl-L-glutamyl 5-phosphate + ADP</text>
        <dbReference type="Rhea" id="RHEA:14629"/>
        <dbReference type="ChEBI" id="CHEBI:30616"/>
        <dbReference type="ChEBI" id="CHEBI:44337"/>
        <dbReference type="ChEBI" id="CHEBI:57936"/>
        <dbReference type="ChEBI" id="CHEBI:456216"/>
        <dbReference type="EC" id="2.7.2.8"/>
    </reaction>
</comment>
<comment type="pathway">
    <text evidence="1">Amino-acid biosynthesis; L-arginine biosynthesis; N(2)-acetyl-L-ornithine from L-glutamate: step 2/4.</text>
</comment>
<comment type="subcellular location">
    <subcellularLocation>
        <location evidence="1">Cytoplasm</location>
    </subcellularLocation>
</comment>
<comment type="similarity">
    <text evidence="1">Belongs to the acetylglutamate kinase family. ArgB subfamily.</text>
</comment>
<sequence length="260" mass="27059">MSDNKSVLVLKVGGALLQCEMGMSRLMTAAAQMIATGQKVLLVHGGGCLVDEQLTANGKETIKLDGLRVTPEDQIPIVVGALAGTSNKILQAAAAKAGLVSVGMSLGDGNTVHAKIKDERLGLVGEVSPNDATYLNFILDQGWLPICSSIAVSADGLMLNVNADQAATALAKLVNGNLVLLSDVSGVLDGKGQLIASLNKTEIETLVKQGVIEKGMKVKVEAALEVAQWMGKPVQVASWRDAEQLKKLVLGQSVGTQIQP</sequence>
<reference key="1">
    <citation type="submission" date="2006-03" db="EMBL/GenBank/DDBJ databases">
        <title>Complete sequence of Shewanella denitrificans OS217.</title>
        <authorList>
            <consortium name="US DOE Joint Genome Institute"/>
            <person name="Copeland A."/>
            <person name="Lucas S."/>
            <person name="Lapidus A."/>
            <person name="Barry K."/>
            <person name="Detter J.C."/>
            <person name="Glavina del Rio T."/>
            <person name="Hammon N."/>
            <person name="Israni S."/>
            <person name="Dalin E."/>
            <person name="Tice H."/>
            <person name="Pitluck S."/>
            <person name="Brettin T."/>
            <person name="Bruce D."/>
            <person name="Han C."/>
            <person name="Tapia R."/>
            <person name="Gilna P."/>
            <person name="Kiss H."/>
            <person name="Schmutz J."/>
            <person name="Larimer F."/>
            <person name="Land M."/>
            <person name="Hauser L."/>
            <person name="Kyrpides N."/>
            <person name="Lykidis A."/>
            <person name="Richardson P."/>
        </authorList>
    </citation>
    <scope>NUCLEOTIDE SEQUENCE [LARGE SCALE GENOMIC DNA]</scope>
    <source>
        <strain>OS217 / ATCC BAA-1090 / DSM 15013</strain>
    </source>
</reference>
<dbReference type="EC" id="2.7.2.8" evidence="1"/>
<dbReference type="EMBL" id="CP000302">
    <property type="protein sequence ID" value="ABE53547.1"/>
    <property type="molecule type" value="Genomic_DNA"/>
</dbReference>
<dbReference type="RefSeq" id="WP_011494714.1">
    <property type="nucleotide sequence ID" value="NC_007954.1"/>
</dbReference>
<dbReference type="SMR" id="Q12SM9"/>
<dbReference type="STRING" id="318161.Sden_0251"/>
<dbReference type="KEGG" id="sdn:Sden_0251"/>
<dbReference type="eggNOG" id="COG0548">
    <property type="taxonomic scope" value="Bacteria"/>
</dbReference>
<dbReference type="HOGENOM" id="CLU_053680_1_1_6"/>
<dbReference type="OrthoDB" id="5915023at2"/>
<dbReference type="UniPathway" id="UPA00068">
    <property type="reaction ID" value="UER00107"/>
</dbReference>
<dbReference type="Proteomes" id="UP000001982">
    <property type="component" value="Chromosome"/>
</dbReference>
<dbReference type="GO" id="GO:0005737">
    <property type="term" value="C:cytoplasm"/>
    <property type="evidence" value="ECO:0007669"/>
    <property type="project" value="UniProtKB-SubCell"/>
</dbReference>
<dbReference type="GO" id="GO:0003991">
    <property type="term" value="F:acetylglutamate kinase activity"/>
    <property type="evidence" value="ECO:0007669"/>
    <property type="project" value="UniProtKB-UniRule"/>
</dbReference>
<dbReference type="GO" id="GO:0005524">
    <property type="term" value="F:ATP binding"/>
    <property type="evidence" value="ECO:0007669"/>
    <property type="project" value="UniProtKB-UniRule"/>
</dbReference>
<dbReference type="GO" id="GO:0042450">
    <property type="term" value="P:arginine biosynthetic process via ornithine"/>
    <property type="evidence" value="ECO:0007669"/>
    <property type="project" value="UniProtKB-UniRule"/>
</dbReference>
<dbReference type="GO" id="GO:0006526">
    <property type="term" value="P:L-arginine biosynthetic process"/>
    <property type="evidence" value="ECO:0007669"/>
    <property type="project" value="UniProtKB-UniPathway"/>
</dbReference>
<dbReference type="Gene3D" id="3.40.1160.10">
    <property type="entry name" value="Acetylglutamate kinase-like"/>
    <property type="match status" value="1"/>
</dbReference>
<dbReference type="HAMAP" id="MF_00082">
    <property type="entry name" value="ArgB"/>
    <property type="match status" value="1"/>
</dbReference>
<dbReference type="InterPro" id="IPR036393">
    <property type="entry name" value="AceGlu_kinase-like_sf"/>
</dbReference>
<dbReference type="InterPro" id="IPR004662">
    <property type="entry name" value="AcgluKinase_fam"/>
</dbReference>
<dbReference type="InterPro" id="IPR037528">
    <property type="entry name" value="ArgB"/>
</dbReference>
<dbReference type="InterPro" id="IPR001048">
    <property type="entry name" value="Asp/Glu/Uridylate_kinase"/>
</dbReference>
<dbReference type="NCBIfam" id="TIGR00761">
    <property type="entry name" value="argB"/>
    <property type="match status" value="1"/>
</dbReference>
<dbReference type="PANTHER" id="PTHR23342">
    <property type="entry name" value="N-ACETYLGLUTAMATE SYNTHASE"/>
    <property type="match status" value="1"/>
</dbReference>
<dbReference type="PANTHER" id="PTHR23342:SF0">
    <property type="entry name" value="N-ACETYLGLUTAMATE SYNTHASE, MITOCHONDRIAL"/>
    <property type="match status" value="1"/>
</dbReference>
<dbReference type="Pfam" id="PF00696">
    <property type="entry name" value="AA_kinase"/>
    <property type="match status" value="1"/>
</dbReference>
<dbReference type="PIRSF" id="PIRSF000728">
    <property type="entry name" value="NAGK"/>
    <property type="match status" value="1"/>
</dbReference>
<dbReference type="SUPFAM" id="SSF53633">
    <property type="entry name" value="Carbamate kinase-like"/>
    <property type="match status" value="1"/>
</dbReference>